<dbReference type="EC" id="1.14.11.32" evidence="3 6"/>
<dbReference type="EC" id="1.14.11.31" evidence="3"/>
<dbReference type="EMBL" id="GQ500141">
    <property type="protein sequence ID" value="ADD85331.1"/>
    <property type="molecule type" value="mRNA"/>
</dbReference>
<dbReference type="EMBL" id="CM010715">
    <property type="protein sequence ID" value="RZC46917.1"/>
    <property type="molecule type" value="Genomic_DNA"/>
</dbReference>
<dbReference type="EMBL" id="CM010715">
    <property type="protein sequence ID" value="RZC46920.1"/>
    <property type="molecule type" value="Genomic_DNA"/>
</dbReference>
<dbReference type="SMR" id="D4N502"/>
<dbReference type="STRING" id="3469.A0A4Y7IDB6"/>
<dbReference type="EnsemblPlants" id="RZC46917">
    <property type="protein sequence ID" value="RZC46917"/>
    <property type="gene ID" value="C5167_039857"/>
</dbReference>
<dbReference type="EnsemblPlants" id="RZC46920">
    <property type="protein sequence ID" value="RZC46920"/>
    <property type="gene ID" value="C5167_039865"/>
</dbReference>
<dbReference type="Gramene" id="RZC46917">
    <property type="protein sequence ID" value="RZC46917"/>
    <property type="gene ID" value="C5167_039857"/>
</dbReference>
<dbReference type="Gramene" id="RZC46920">
    <property type="protein sequence ID" value="RZC46920"/>
    <property type="gene ID" value="C5167_039865"/>
</dbReference>
<dbReference type="KEGG" id="ag:ADD85331"/>
<dbReference type="OMA" id="CEIQDFF"/>
<dbReference type="OrthoDB" id="288590at2759"/>
<dbReference type="SABIO-RK" id="D4N502"/>
<dbReference type="UniPathway" id="UPA00852"/>
<dbReference type="Proteomes" id="UP000316621">
    <property type="component" value="Chromosome 1"/>
</dbReference>
<dbReference type="GO" id="GO:0102805">
    <property type="term" value="F:codeine O-demethylase activity"/>
    <property type="evidence" value="ECO:0000314"/>
    <property type="project" value="UniProtKB"/>
</dbReference>
<dbReference type="GO" id="GO:0046872">
    <property type="term" value="F:metal ion binding"/>
    <property type="evidence" value="ECO:0007669"/>
    <property type="project" value="UniProtKB-KW"/>
</dbReference>
<dbReference type="GO" id="GO:0008168">
    <property type="term" value="F:methyltransferase activity"/>
    <property type="evidence" value="ECO:0007669"/>
    <property type="project" value="UniProtKB-KW"/>
</dbReference>
<dbReference type="GO" id="GO:0102802">
    <property type="term" value="F:thebaine 6-O-demethylase activity"/>
    <property type="evidence" value="ECO:0007669"/>
    <property type="project" value="RHEA"/>
</dbReference>
<dbReference type="GO" id="GO:0032259">
    <property type="term" value="P:methylation"/>
    <property type="evidence" value="ECO:0007669"/>
    <property type="project" value="UniProtKB-KW"/>
</dbReference>
<dbReference type="GO" id="GO:0097295">
    <property type="term" value="P:morphine biosynthetic process"/>
    <property type="evidence" value="ECO:0000314"/>
    <property type="project" value="UniProtKB"/>
</dbReference>
<dbReference type="FunFam" id="2.60.120.330:FF:000001">
    <property type="entry name" value="Protein SRG1"/>
    <property type="match status" value="1"/>
</dbReference>
<dbReference type="Gene3D" id="2.60.120.330">
    <property type="entry name" value="B-lactam Antibiotic, Isopenicillin N Synthase, Chain"/>
    <property type="match status" value="1"/>
</dbReference>
<dbReference type="InterPro" id="IPR026992">
    <property type="entry name" value="DIOX_N"/>
</dbReference>
<dbReference type="InterPro" id="IPR044861">
    <property type="entry name" value="IPNS-like_FE2OG_OXY"/>
</dbReference>
<dbReference type="InterPro" id="IPR027443">
    <property type="entry name" value="IPNS-like_sf"/>
</dbReference>
<dbReference type="InterPro" id="IPR005123">
    <property type="entry name" value="Oxoglu/Fe-dep_dioxygenase_dom"/>
</dbReference>
<dbReference type="InterPro" id="IPR050295">
    <property type="entry name" value="Plant_2OG-oxidoreductases"/>
</dbReference>
<dbReference type="PANTHER" id="PTHR47991">
    <property type="entry name" value="OXOGLUTARATE/IRON-DEPENDENT DIOXYGENASE"/>
    <property type="match status" value="1"/>
</dbReference>
<dbReference type="Pfam" id="PF03171">
    <property type="entry name" value="2OG-FeII_Oxy"/>
    <property type="match status" value="1"/>
</dbReference>
<dbReference type="Pfam" id="PF14226">
    <property type="entry name" value="DIOX_N"/>
    <property type="match status" value="1"/>
</dbReference>
<dbReference type="SUPFAM" id="SSF51197">
    <property type="entry name" value="Clavaminate synthase-like"/>
    <property type="match status" value="1"/>
</dbReference>
<dbReference type="PROSITE" id="PS51471">
    <property type="entry name" value="FE2OG_OXY"/>
    <property type="match status" value="1"/>
</dbReference>
<sequence length="360" mass="40849">METPILIKLGNGLSIPSVQELAKLTLAEIPSRYTCTGESPLNNIGASVTDDETVPVIDLQNLLSPEPVVGKLELDKLHSACKEWGFFQLVNHGVDALLMDNIKSEIKGFFNLPMNEKTKYGQQDGDFEGFGQPYIESEDQRLDWTEVFSMLSLPLHLRKPHLFPELPLPFRETLESYLSKMKKLSTVVFEMLEKSLQLVEIKGMTDLFEDGLQTMRMNYYPPCPRPELVLGLTSHSDFSGLTILLQLNEVEGLQIRKEERWISIKPLPDAFIVNVGDILEIMTNGIYRSVEHRAVVNSTKERLSIATFHDSKLESEIGPISSLVTPETPALFKRGRYEDILKENLSRKLDGKSFLDYMRM</sequence>
<comment type="function">
    <text evidence="3 4 5 6">Non-heme dioxygenase involved in biosynthesis of morphinan-type benzylisoquinoline and opiate alkaloids natural products (PubMed:29779229). Mediates the conversion of codeine to morphine (PubMed:20228795, PubMed:22098111, PubMed:29779229). Also catalyzes, with lower efficiency, the 3-O-demethylation of thebaine to oripavine and of (S)-scoulerine to 3-O-demethylscoulerine (PubMed:20228795, PubMed:29779229). Supports, with a lower turnover, the conversion of codeinone to morphinone, of thebaine to neopinone, and of neopine to neomorphine (PubMed:29779229). Supports dealkylation reactions such as O,O-demethylenation in the metabolism of protopine, benzo[c]phenanthridine, and rhoeadine alkaloids; cleaves a methylenedioxy bridge leaving two hydroxyl groups (PubMed:23928311). Catalyzes the O,O-demethylenation of methylenedioxy bridges on protopine alkaloids such as allocryptopine, cryptopine and protopine (PubMed:23928311). No activity with (S)-reticuline, salutaridine, papaverine, (S)-corytuberine, oripavine, pavine or noscapine (PubMed:20228795).</text>
</comment>
<comment type="catalytic activity">
    <reaction evidence="3 4 5 6">
        <text>codeine + 2-oxoglutarate + O2 = morphine + formaldehyde + succinate + CO2</text>
        <dbReference type="Rhea" id="RHEA:27413"/>
        <dbReference type="ChEBI" id="CHEBI:15379"/>
        <dbReference type="ChEBI" id="CHEBI:16526"/>
        <dbReference type="ChEBI" id="CHEBI:16810"/>
        <dbReference type="ChEBI" id="CHEBI:16842"/>
        <dbReference type="ChEBI" id="CHEBI:30031"/>
        <dbReference type="ChEBI" id="CHEBI:57871"/>
        <dbReference type="ChEBI" id="CHEBI:58097"/>
        <dbReference type="EC" id="1.14.11.32"/>
    </reaction>
</comment>
<comment type="catalytic activity">
    <reaction evidence="3 5 6">
        <text>thebaine + 2-oxoglutarate + O2 = oripavine + formaldehyde + succinate + CO2</text>
        <dbReference type="Rhea" id="RHEA:75955"/>
        <dbReference type="ChEBI" id="CHEBI:15379"/>
        <dbReference type="ChEBI" id="CHEBI:16526"/>
        <dbReference type="ChEBI" id="CHEBI:16810"/>
        <dbReference type="ChEBI" id="CHEBI:16842"/>
        <dbReference type="ChEBI" id="CHEBI:30031"/>
        <dbReference type="ChEBI" id="CHEBI:59953"/>
        <dbReference type="ChEBI" id="CHEBI:194499"/>
        <dbReference type="EC" id="1.14.11.32"/>
    </reaction>
</comment>
<comment type="catalytic activity">
    <reaction evidence="3 5 6">
        <text>(S)-scoulerine + 2-oxoglutarate + O2 = (S)-3-O-demethylscoulerine + formaldehyde + succinate + CO2</text>
        <dbReference type="Rhea" id="RHEA:75959"/>
        <dbReference type="ChEBI" id="CHEBI:15379"/>
        <dbReference type="ChEBI" id="CHEBI:16526"/>
        <dbReference type="ChEBI" id="CHEBI:16810"/>
        <dbReference type="ChEBI" id="CHEBI:16842"/>
        <dbReference type="ChEBI" id="CHEBI:17129"/>
        <dbReference type="ChEBI" id="CHEBI:30031"/>
        <dbReference type="ChEBI" id="CHEBI:194500"/>
    </reaction>
</comment>
<comment type="catalytic activity">
    <reaction evidence="3">
        <text>thebaine + 2-oxoglutarate + O2 = neopinone + formaldehyde + succinate + CO2</text>
        <dbReference type="Rhea" id="RHEA:27477"/>
        <dbReference type="ChEBI" id="CHEBI:15379"/>
        <dbReference type="ChEBI" id="CHEBI:16526"/>
        <dbReference type="ChEBI" id="CHEBI:16810"/>
        <dbReference type="ChEBI" id="CHEBI:16842"/>
        <dbReference type="ChEBI" id="CHEBI:30031"/>
        <dbReference type="ChEBI" id="CHEBI:59950"/>
        <dbReference type="ChEBI" id="CHEBI:59953"/>
        <dbReference type="EC" id="1.14.11.31"/>
    </reaction>
</comment>
<comment type="catalytic activity">
    <reaction evidence="5">
        <text>(S)-reticuline + 2-oxoglutarate + O2 = (S)-6-O-demethylreticuline + formaldehyde + succinate + CO2</text>
        <dbReference type="Rhea" id="RHEA:76027"/>
        <dbReference type="ChEBI" id="CHEBI:15379"/>
        <dbReference type="ChEBI" id="CHEBI:16526"/>
        <dbReference type="ChEBI" id="CHEBI:16810"/>
        <dbReference type="ChEBI" id="CHEBI:16842"/>
        <dbReference type="ChEBI" id="CHEBI:30031"/>
        <dbReference type="ChEBI" id="CHEBI:57873"/>
        <dbReference type="ChEBI" id="CHEBI:194502"/>
    </reaction>
</comment>
<comment type="catalytic activity">
    <reaction evidence="5">
        <text>(S)-tetrahydropalmatine + S-adenosyl-L-methionine = (S)-cis-N-methyltetrahydropalmatine + S-adenosyl-L-homocysteine</text>
        <dbReference type="Rhea" id="RHEA:76047"/>
        <dbReference type="ChEBI" id="CHEBI:16563"/>
        <dbReference type="ChEBI" id="CHEBI:57856"/>
        <dbReference type="ChEBI" id="CHEBI:59789"/>
        <dbReference type="ChEBI" id="CHEBI:194514"/>
    </reaction>
</comment>
<comment type="cofactor">
    <cofactor evidence="3">
        <name>L-ascorbate</name>
        <dbReference type="ChEBI" id="CHEBI:38290"/>
    </cofactor>
</comment>
<comment type="cofactor">
    <cofactor evidence="3">
        <name>Fe cation</name>
        <dbReference type="ChEBI" id="CHEBI:24875"/>
    </cofactor>
    <text evidence="2">Binds 1 Fe(2+) ion per subunit.</text>
</comment>
<comment type="activity regulation">
    <text evidence="3">Moderate substrate inhibition. Not inhibited in vitro by acylcyclohexanediones.</text>
</comment>
<comment type="biophysicochemical properties">
    <kinetics>
        <KM evidence="5">198 uM for (S)-scoulerine</KM>
        <KM evidence="3">20.5 uM for codeine</KM>
        <KM evidence="3">41.9 uM for thebaine</KM>
        <KM evidence="3">19 uM for 2-oxoglutarate</KM>
        <Vmax evidence="5">11.6 pmol/sec/mg enzyme with (S)-scoulerine as substrate</Vmax>
        <text evidence="5">kcat is 0.095 sec(-1) with (S)-scoulerine as substrate.</text>
    </kinetics>
</comment>
<comment type="pathway">
    <text evidence="9">Alkaloid biosynthesis; morphine biosynthesis.</text>
</comment>
<comment type="tissue specificity">
    <text evidence="7">Mainly expressed in stems, capsules and leaves and, to a lower extent, in roots.</text>
</comment>
<comment type="developmental stage">
    <text evidence="7">Accumulates in leaves and stems during flowering (PubMed:29872026). Highly expressed in capsules walls and contents after flowering (PubMed:29872026).</text>
</comment>
<comment type="disruption phenotype">
    <text evidence="4 5 6">Accumulation of upstream metabolites, such as codeine, thebaine, codeinone and neopine, but reduced production of morphine and oripavine (PubMed:22098111, PubMed:29779229). Lower levels of sanguinarine and 1-benzylisoquinoline laudanosine and, to some extent, of noscapine and papaverine in roots but increased accumulation of the protopine alkaloids cryptopine, protopine, O-demethylcryptopine and allocryptopine, and of the protoberberines sinactine, N-methystylopine, N-methylcanadine and rhoeadine N-methylporphyroxine (PubMed:23928311).</text>
</comment>
<comment type="similarity">
    <text evidence="9">Belongs to the iron/ascorbate-dependent oxidoreductase family.</text>
</comment>
<protein>
    <recommendedName>
        <fullName evidence="8">Codeine O-demethylase</fullName>
        <ecNumber evidence="3 6">1.14.11.32</ecNumber>
    </recommendedName>
    <alternativeName>
        <fullName evidence="8">Thebaine 6-O-demethylase</fullName>
        <ecNumber evidence="3">1.14.11.31</ecNumber>
    </alternativeName>
</protein>
<reference key="1">
    <citation type="journal article" date="2010" name="Nat. Chem. Biol.">
        <title>Dioxygenases catalyze the O-demethylation steps of morphine biosynthesis in opium poppy.</title>
        <authorList>
            <person name="Hagel J.M."/>
            <person name="Facchini P.J."/>
        </authorList>
    </citation>
    <scope>NUCLEOTIDE SEQUENCE [MRNA]</scope>
    <scope>FUNCTION</scope>
    <scope>CATALYTIC ACTIVITY</scope>
    <scope>COFACTOR</scope>
    <scope>BIOPHYSICOCHEMICAL PROPERTIES</scope>
    <scope>ACTIVITY REGULATION</scope>
</reference>
<reference key="2">
    <citation type="journal article" date="2018" name="Science">
        <title>The opium poppy genome and morphinan production.</title>
        <authorList>
            <person name="Guo L."/>
            <person name="Winzer T."/>
            <person name="Yang X."/>
            <person name="Li Y."/>
            <person name="Ning Z."/>
            <person name="He Z."/>
            <person name="Teodor R."/>
            <person name="Lu Y."/>
            <person name="Bowser T.A."/>
            <person name="Graham I.A."/>
            <person name="Ye K."/>
        </authorList>
    </citation>
    <scope>NUCLEOTIDE SEQUENCE [LARGE SCALE GENOMIC DNA]</scope>
    <source>
        <strain>cv. HN1</strain>
        <tissue>Leaf</tissue>
    </source>
</reference>
<reference key="3">
    <citation type="journal article" date="2012" name="Plant J.">
        <title>Systematic knockdown of morphine pathway enzymes in opium poppy using virus-induced gene silencing.</title>
        <authorList>
            <person name="Wijekoon C.P."/>
            <person name="Facchini P.J."/>
        </authorList>
    </citation>
    <scope>FUNCTION</scope>
    <scope>DISRUPTION PHENOTYPE</scope>
    <scope>CATALYTIC ACTIVITY</scope>
</reference>
<reference key="4">
    <citation type="journal article" date="2013" name="J. Biol. Chem.">
        <title>Dioxygenases catalyze O-demethylation and O,O-demethylenation with widespread roles in benzylisoquinoline alkaloid metabolism in opium poppy.</title>
        <authorList>
            <person name="Farrow S.C."/>
            <person name="Facchini P.J."/>
        </authorList>
    </citation>
    <scope>FUNCTION</scope>
    <scope>DISRUPTION PHENOTYPE</scope>
    <scope>CATALYTIC ACTIVITY</scope>
    <scope>BIOPHYSICOCHEMICAL PROPERTIES</scope>
    <source>
        <strain>cv. Bea's Choice</strain>
    </source>
</reference>
<reference key="5">
    <citation type="journal article" date="2018" name="J. Biosci.">
        <title>Spatiotemporal oscillations of morphinan alkaloids in opium poppy.</title>
        <authorList>
            <person name="Rezaei M."/>
            <person name="Naghavi M.R."/>
            <person name="Hosseinzadeh A."/>
            <person name="Abasi A."/>
            <person name="Nasiri J."/>
        </authorList>
    </citation>
    <scope>TISSUE SPECIFICITY</scope>
    <scope>DEVELOPMENTAL STAGE</scope>
</reference>
<reference key="6">
    <citation type="journal article" date="2018" name="Plant J.">
        <title>Codeinone reductase isoforms with differential stability, efficiency and product selectivity in opium poppy.</title>
        <authorList>
            <person name="Dastmalchi M."/>
            <person name="Chang L."/>
            <person name="Torres M.A."/>
            <person name="Ng K.K.S."/>
            <person name="Facchini P.J."/>
        </authorList>
    </citation>
    <scope>FUNCTION</scope>
    <scope>DISRUPTION PHENOTYPE</scope>
    <scope>CATALYTIC ACTIVITY</scope>
</reference>
<organism>
    <name type="scientific">Papaver somniferum</name>
    <name type="common">Opium poppy</name>
    <dbReference type="NCBI Taxonomy" id="3469"/>
    <lineage>
        <taxon>Eukaryota</taxon>
        <taxon>Viridiplantae</taxon>
        <taxon>Streptophyta</taxon>
        <taxon>Embryophyta</taxon>
        <taxon>Tracheophyta</taxon>
        <taxon>Spermatophyta</taxon>
        <taxon>Magnoliopsida</taxon>
        <taxon>Ranunculales</taxon>
        <taxon>Papaveraceae</taxon>
        <taxon>Papaveroideae</taxon>
        <taxon>Papaver</taxon>
    </lineage>
</organism>
<accession>D4N502</accession>
<accession>A0A4Y7IDB6</accession>
<name>DIOX3_PAPSO</name>
<gene>
    <name evidence="8" type="primary">CODM</name>
    <name evidence="8" type="synonym">DIOX3</name>
    <name evidence="10" type="ORF">C5167_039857</name>
    <name evidence="11" type="ORF">C5167_039865</name>
</gene>
<feature type="chain" id="PRO_0000401479" description="Codeine O-demethylase">
    <location>
        <begin position="1"/>
        <end position="360"/>
    </location>
</feature>
<feature type="domain" description="Fe2OG dioxygenase" evidence="2">
    <location>
        <begin position="211"/>
        <end position="311"/>
    </location>
</feature>
<feature type="binding site" evidence="1">
    <location>
        <position position="220"/>
    </location>
    <ligand>
        <name>2-oxoglutarate</name>
        <dbReference type="ChEBI" id="CHEBI:16810"/>
    </ligand>
</feature>
<feature type="binding site" evidence="2">
    <location>
        <position position="235"/>
    </location>
    <ligand>
        <name>Fe cation</name>
        <dbReference type="ChEBI" id="CHEBI:24875"/>
    </ligand>
</feature>
<feature type="binding site" evidence="2">
    <location>
        <position position="237"/>
    </location>
    <ligand>
        <name>Fe cation</name>
        <dbReference type="ChEBI" id="CHEBI:24875"/>
    </ligand>
</feature>
<feature type="binding site" evidence="2">
    <location>
        <position position="292"/>
    </location>
    <ligand>
        <name>Fe cation</name>
        <dbReference type="ChEBI" id="CHEBI:24875"/>
    </ligand>
</feature>
<feature type="binding site" evidence="2">
    <location>
        <position position="302"/>
    </location>
    <ligand>
        <name>2-oxoglutarate</name>
        <dbReference type="ChEBI" id="CHEBI:16810"/>
    </ligand>
</feature>
<feature type="binding site" evidence="1">
    <location>
        <position position="304"/>
    </location>
    <ligand>
        <name>2-oxoglutarate</name>
        <dbReference type="ChEBI" id="CHEBI:16810"/>
    </ligand>
</feature>
<evidence type="ECO:0000250" key="1">
    <source>
        <dbReference type="UniProtKB" id="D4N500"/>
    </source>
</evidence>
<evidence type="ECO:0000255" key="2">
    <source>
        <dbReference type="PROSITE-ProRule" id="PRU00805"/>
    </source>
</evidence>
<evidence type="ECO:0000269" key="3">
    <source>
    </source>
</evidence>
<evidence type="ECO:0000269" key="4">
    <source>
    </source>
</evidence>
<evidence type="ECO:0000269" key="5">
    <source>
    </source>
</evidence>
<evidence type="ECO:0000269" key="6">
    <source>
    </source>
</evidence>
<evidence type="ECO:0000269" key="7">
    <source>
    </source>
</evidence>
<evidence type="ECO:0000303" key="8">
    <source>
    </source>
</evidence>
<evidence type="ECO:0000305" key="9"/>
<evidence type="ECO:0000312" key="10">
    <source>
        <dbReference type="EMBL" id="RZC46917.1"/>
    </source>
</evidence>
<evidence type="ECO:0000312" key="11">
    <source>
        <dbReference type="EMBL" id="RZC46920.1"/>
    </source>
</evidence>
<proteinExistence type="evidence at protein level"/>
<keyword id="KW-0017">Alkaloid metabolism</keyword>
<keyword id="KW-0223">Dioxygenase</keyword>
<keyword id="KW-0408">Iron</keyword>
<keyword id="KW-0479">Metal-binding</keyword>
<keyword id="KW-0489">Methyltransferase</keyword>
<keyword id="KW-0560">Oxidoreductase</keyword>
<keyword id="KW-1185">Reference proteome</keyword>
<keyword id="KW-0808">Transferase</keyword>